<proteinExistence type="inferred from homology"/>
<evidence type="ECO:0000255" key="1">
    <source>
        <dbReference type="HAMAP-Rule" id="MF_00182"/>
    </source>
</evidence>
<name>FMT_JANMA</name>
<gene>
    <name evidence="1" type="primary">fmt</name>
    <name type="ordered locus">mma_0144</name>
</gene>
<dbReference type="EC" id="2.1.2.9" evidence="1"/>
<dbReference type="EMBL" id="CP000269">
    <property type="protein sequence ID" value="ABR88409.1"/>
    <property type="molecule type" value="Genomic_DNA"/>
</dbReference>
<dbReference type="RefSeq" id="WP_011979370.1">
    <property type="nucleotide sequence ID" value="NC_009659.1"/>
</dbReference>
<dbReference type="SMR" id="A6SU87"/>
<dbReference type="STRING" id="375286.mma_0144"/>
<dbReference type="KEGG" id="mms:mma_0144"/>
<dbReference type="eggNOG" id="COG0223">
    <property type="taxonomic scope" value="Bacteria"/>
</dbReference>
<dbReference type="HOGENOM" id="CLU_033347_1_2_4"/>
<dbReference type="OrthoDB" id="9802815at2"/>
<dbReference type="Proteomes" id="UP000006388">
    <property type="component" value="Chromosome"/>
</dbReference>
<dbReference type="GO" id="GO:0005829">
    <property type="term" value="C:cytosol"/>
    <property type="evidence" value="ECO:0007669"/>
    <property type="project" value="TreeGrafter"/>
</dbReference>
<dbReference type="GO" id="GO:0004479">
    <property type="term" value="F:methionyl-tRNA formyltransferase activity"/>
    <property type="evidence" value="ECO:0007669"/>
    <property type="project" value="UniProtKB-UniRule"/>
</dbReference>
<dbReference type="CDD" id="cd08646">
    <property type="entry name" value="FMT_core_Met-tRNA-FMT_N"/>
    <property type="match status" value="1"/>
</dbReference>
<dbReference type="CDD" id="cd08704">
    <property type="entry name" value="Met_tRNA_FMT_C"/>
    <property type="match status" value="1"/>
</dbReference>
<dbReference type="Gene3D" id="3.10.25.10">
    <property type="entry name" value="Formyl transferase, C-terminal domain"/>
    <property type="match status" value="1"/>
</dbReference>
<dbReference type="Gene3D" id="3.40.50.170">
    <property type="entry name" value="Formyl transferase, N-terminal domain"/>
    <property type="match status" value="1"/>
</dbReference>
<dbReference type="HAMAP" id="MF_00182">
    <property type="entry name" value="Formyl_trans"/>
    <property type="match status" value="1"/>
</dbReference>
<dbReference type="InterPro" id="IPR005794">
    <property type="entry name" value="Fmt"/>
</dbReference>
<dbReference type="InterPro" id="IPR005793">
    <property type="entry name" value="Formyl_trans_C"/>
</dbReference>
<dbReference type="InterPro" id="IPR037022">
    <property type="entry name" value="Formyl_trans_C_sf"/>
</dbReference>
<dbReference type="InterPro" id="IPR002376">
    <property type="entry name" value="Formyl_transf_N"/>
</dbReference>
<dbReference type="InterPro" id="IPR036477">
    <property type="entry name" value="Formyl_transf_N_sf"/>
</dbReference>
<dbReference type="InterPro" id="IPR011034">
    <property type="entry name" value="Formyl_transferase-like_C_sf"/>
</dbReference>
<dbReference type="InterPro" id="IPR044135">
    <property type="entry name" value="Met-tRNA-FMT_C"/>
</dbReference>
<dbReference type="InterPro" id="IPR041711">
    <property type="entry name" value="Met-tRNA-FMT_N"/>
</dbReference>
<dbReference type="NCBIfam" id="TIGR00460">
    <property type="entry name" value="fmt"/>
    <property type="match status" value="1"/>
</dbReference>
<dbReference type="PANTHER" id="PTHR11138">
    <property type="entry name" value="METHIONYL-TRNA FORMYLTRANSFERASE"/>
    <property type="match status" value="1"/>
</dbReference>
<dbReference type="PANTHER" id="PTHR11138:SF5">
    <property type="entry name" value="METHIONYL-TRNA FORMYLTRANSFERASE, MITOCHONDRIAL"/>
    <property type="match status" value="1"/>
</dbReference>
<dbReference type="Pfam" id="PF02911">
    <property type="entry name" value="Formyl_trans_C"/>
    <property type="match status" value="1"/>
</dbReference>
<dbReference type="Pfam" id="PF00551">
    <property type="entry name" value="Formyl_trans_N"/>
    <property type="match status" value="1"/>
</dbReference>
<dbReference type="SUPFAM" id="SSF50486">
    <property type="entry name" value="FMT C-terminal domain-like"/>
    <property type="match status" value="1"/>
</dbReference>
<dbReference type="SUPFAM" id="SSF53328">
    <property type="entry name" value="Formyltransferase"/>
    <property type="match status" value="1"/>
</dbReference>
<accession>A6SU87</accession>
<keyword id="KW-0648">Protein biosynthesis</keyword>
<keyword id="KW-0808">Transferase</keyword>
<organism>
    <name type="scientific">Janthinobacterium sp. (strain Marseille)</name>
    <name type="common">Minibacterium massiliensis</name>
    <dbReference type="NCBI Taxonomy" id="375286"/>
    <lineage>
        <taxon>Bacteria</taxon>
        <taxon>Pseudomonadati</taxon>
        <taxon>Pseudomonadota</taxon>
        <taxon>Betaproteobacteria</taxon>
        <taxon>Burkholderiales</taxon>
        <taxon>Oxalobacteraceae</taxon>
        <taxon>Janthinobacterium</taxon>
    </lineage>
</organism>
<comment type="function">
    <text evidence="1">Attaches a formyl group to the free amino group of methionyl-tRNA(fMet). The formyl group appears to play a dual role in the initiator identity of N-formylmethionyl-tRNA by promoting its recognition by IF2 and preventing the misappropriation of this tRNA by the elongation apparatus.</text>
</comment>
<comment type="catalytic activity">
    <reaction evidence="1">
        <text>L-methionyl-tRNA(fMet) + (6R)-10-formyltetrahydrofolate = N-formyl-L-methionyl-tRNA(fMet) + (6S)-5,6,7,8-tetrahydrofolate + H(+)</text>
        <dbReference type="Rhea" id="RHEA:24380"/>
        <dbReference type="Rhea" id="RHEA-COMP:9952"/>
        <dbReference type="Rhea" id="RHEA-COMP:9953"/>
        <dbReference type="ChEBI" id="CHEBI:15378"/>
        <dbReference type="ChEBI" id="CHEBI:57453"/>
        <dbReference type="ChEBI" id="CHEBI:78530"/>
        <dbReference type="ChEBI" id="CHEBI:78844"/>
        <dbReference type="ChEBI" id="CHEBI:195366"/>
        <dbReference type="EC" id="2.1.2.9"/>
    </reaction>
</comment>
<comment type="similarity">
    <text evidence="1">Belongs to the Fmt family.</text>
</comment>
<feature type="chain" id="PRO_1000020080" description="Methionyl-tRNA formyltransferase">
    <location>
        <begin position="1"/>
        <end position="316"/>
    </location>
</feature>
<feature type="binding site" evidence="1">
    <location>
        <begin position="117"/>
        <end position="120"/>
    </location>
    <ligand>
        <name>(6S)-5,6,7,8-tetrahydrofolate</name>
        <dbReference type="ChEBI" id="CHEBI:57453"/>
    </ligand>
</feature>
<protein>
    <recommendedName>
        <fullName evidence="1">Methionyl-tRNA formyltransferase</fullName>
        <ecNumber evidence="1">2.1.2.9</ecNumber>
    </recommendedName>
</protein>
<sequence>MKIIFAGTPEFAAVALAALHAAGFEIPLVLTQPDRPAGRGMQLHASAVKQFALAHDIPVAQPVSLRLDGKYPEVAAEAHALLKATPHDVMVVAAYGLILPQSILDIPPRGCINIHASLLPRWRGAAPIHRAIESGDAETGVTIMQMELGLDTGPMLAMQRLPITADDTTASLHDKLATLGGEMIVQTLRRMEQGDLPAEPQPDGANYAAKILKEEATLDFTQPAEQLARKIRAFNPFPGAAATCDGTLIKFWHAQAVPASNQLPPGQVIAANPHDGVLVACGDGALRVTELQKPGGKRLSAVEFLKGFTLEDKRFQ</sequence>
<reference key="1">
    <citation type="journal article" date="2007" name="PLoS Genet.">
        <title>Genome analysis of Minibacterium massiliensis highlights the convergent evolution of water-living bacteria.</title>
        <authorList>
            <person name="Audic S."/>
            <person name="Robert C."/>
            <person name="Campagna B."/>
            <person name="Parinello H."/>
            <person name="Claverie J.-M."/>
            <person name="Raoult D."/>
            <person name="Drancourt M."/>
        </authorList>
    </citation>
    <scope>NUCLEOTIDE SEQUENCE [LARGE SCALE GENOMIC DNA]</scope>
    <source>
        <strain>Marseille</strain>
    </source>
</reference>